<proteinExistence type="inferred from homology"/>
<name>GATY_ECO55</name>
<accession>B7L9W7</accession>
<evidence type="ECO:0000255" key="1">
    <source>
        <dbReference type="HAMAP-Rule" id="MF_01294"/>
    </source>
</evidence>
<dbReference type="EC" id="4.1.2.40" evidence="1"/>
<dbReference type="EMBL" id="CU928145">
    <property type="protein sequence ID" value="CAU98222.1"/>
    <property type="molecule type" value="Genomic_DNA"/>
</dbReference>
<dbReference type="RefSeq" id="WP_000338050.1">
    <property type="nucleotide sequence ID" value="NC_011748.1"/>
</dbReference>
<dbReference type="SMR" id="B7L9W7"/>
<dbReference type="KEGG" id="eck:EC55989_2351"/>
<dbReference type="HOGENOM" id="CLU_040088_0_1_6"/>
<dbReference type="UniPathway" id="UPA00704">
    <property type="reaction ID" value="UER00716"/>
</dbReference>
<dbReference type="Proteomes" id="UP000000746">
    <property type="component" value="Chromosome"/>
</dbReference>
<dbReference type="GO" id="GO:0005829">
    <property type="term" value="C:cytosol"/>
    <property type="evidence" value="ECO:0007669"/>
    <property type="project" value="TreeGrafter"/>
</dbReference>
<dbReference type="GO" id="GO:0009025">
    <property type="term" value="F:tagatose-bisphosphate aldolase activity"/>
    <property type="evidence" value="ECO:0007669"/>
    <property type="project" value="UniProtKB-UniRule"/>
</dbReference>
<dbReference type="GO" id="GO:0008270">
    <property type="term" value="F:zinc ion binding"/>
    <property type="evidence" value="ECO:0007669"/>
    <property type="project" value="UniProtKB-UniRule"/>
</dbReference>
<dbReference type="GO" id="GO:2001059">
    <property type="term" value="P:D-tagatose 6-phosphate catabolic process"/>
    <property type="evidence" value="ECO:0007669"/>
    <property type="project" value="UniProtKB-UniRule"/>
</dbReference>
<dbReference type="GO" id="GO:0019404">
    <property type="term" value="P:galactitol catabolic process"/>
    <property type="evidence" value="ECO:0007669"/>
    <property type="project" value="InterPro"/>
</dbReference>
<dbReference type="CDD" id="cd00947">
    <property type="entry name" value="TBP_aldolase_IIB"/>
    <property type="match status" value="1"/>
</dbReference>
<dbReference type="FunFam" id="3.20.20.70:FF:000043">
    <property type="entry name" value="D-tagatose-1,6-bisphosphate aldolase subunit GatY"/>
    <property type="match status" value="1"/>
</dbReference>
<dbReference type="Gene3D" id="3.20.20.70">
    <property type="entry name" value="Aldolase class I"/>
    <property type="match status" value="1"/>
</dbReference>
<dbReference type="HAMAP" id="MF_01294">
    <property type="entry name" value="TagBP_aldolase_GatY"/>
    <property type="match status" value="1"/>
</dbReference>
<dbReference type="InterPro" id="IPR013785">
    <property type="entry name" value="Aldolase_TIM"/>
</dbReference>
<dbReference type="InterPro" id="IPR050246">
    <property type="entry name" value="Class_II_FBP_aldolase"/>
</dbReference>
<dbReference type="InterPro" id="IPR000771">
    <property type="entry name" value="FBA_II"/>
</dbReference>
<dbReference type="InterPro" id="IPR011288">
    <property type="entry name" value="TagBP_ald_KbaY/GatY"/>
</dbReference>
<dbReference type="InterPro" id="IPR023955">
    <property type="entry name" value="TagBP_aldolase_GatY"/>
</dbReference>
<dbReference type="NCBIfam" id="TIGR00167">
    <property type="entry name" value="cbbA"/>
    <property type="match status" value="1"/>
</dbReference>
<dbReference type="NCBIfam" id="NF006626">
    <property type="entry name" value="PRK09195.1"/>
    <property type="match status" value="1"/>
</dbReference>
<dbReference type="NCBIfam" id="NF009374">
    <property type="entry name" value="PRK12737.1"/>
    <property type="match status" value="1"/>
</dbReference>
<dbReference type="NCBIfam" id="TIGR01858">
    <property type="entry name" value="tag_bisphos_ald"/>
    <property type="match status" value="1"/>
</dbReference>
<dbReference type="PANTHER" id="PTHR30304">
    <property type="entry name" value="D-TAGATOSE-1,6-BISPHOSPHATE ALDOLASE"/>
    <property type="match status" value="1"/>
</dbReference>
<dbReference type="PANTHER" id="PTHR30304:SF0">
    <property type="entry name" value="D-TAGATOSE-1,6-BISPHOSPHATE ALDOLASE SUBUNIT GATY-RELATED"/>
    <property type="match status" value="1"/>
</dbReference>
<dbReference type="Pfam" id="PF01116">
    <property type="entry name" value="F_bP_aldolase"/>
    <property type="match status" value="1"/>
</dbReference>
<dbReference type="PIRSF" id="PIRSF001359">
    <property type="entry name" value="F_bP_aldolase_II"/>
    <property type="match status" value="1"/>
</dbReference>
<dbReference type="SUPFAM" id="SSF51569">
    <property type="entry name" value="Aldolase"/>
    <property type="match status" value="1"/>
</dbReference>
<dbReference type="PROSITE" id="PS00602">
    <property type="entry name" value="ALDOLASE_CLASS_II_1"/>
    <property type="match status" value="1"/>
</dbReference>
<dbReference type="PROSITE" id="PS00806">
    <property type="entry name" value="ALDOLASE_CLASS_II_2"/>
    <property type="match status" value="1"/>
</dbReference>
<comment type="function">
    <text evidence="1">Catalytic subunit of the tagatose-1,6-bisphosphate aldolase GatYZ, which catalyzes the reversible aldol condensation of dihydroxyacetone phosphate (DHAP or glycerone-phosphate) with glyceraldehyde 3-phosphate (G3P) to produce tagatose 1,6-bisphosphate (TBP). Requires GatZ subunit for full activity and stability. Is involved in the catabolism of galactitol.</text>
</comment>
<comment type="catalytic activity">
    <reaction evidence="1">
        <text>D-tagatofuranose 1,6-bisphosphate = D-glyceraldehyde 3-phosphate + dihydroxyacetone phosphate</text>
        <dbReference type="Rhea" id="RHEA:22948"/>
        <dbReference type="ChEBI" id="CHEBI:57642"/>
        <dbReference type="ChEBI" id="CHEBI:58694"/>
        <dbReference type="ChEBI" id="CHEBI:59776"/>
        <dbReference type="EC" id="4.1.2.40"/>
    </reaction>
</comment>
<comment type="cofactor">
    <cofactor evidence="1">
        <name>Zn(2+)</name>
        <dbReference type="ChEBI" id="CHEBI:29105"/>
    </cofactor>
    <text evidence="1">Binds 1 zinc ion per subunit.</text>
</comment>
<comment type="pathway">
    <text evidence="1">Carbohydrate metabolism; D-tagatose 6-phosphate degradation; D-glyceraldehyde 3-phosphate and glycerone phosphate from D-tagatose 6-phosphate: step 2/2.</text>
</comment>
<comment type="subunit">
    <text evidence="1">Forms a complex with GatZ.</text>
</comment>
<comment type="similarity">
    <text evidence="1">Belongs to the class II fructose-bisphosphate aldolase family. TagBP aldolase GatY subfamily.</text>
</comment>
<keyword id="KW-0298">Galactitol metabolism</keyword>
<keyword id="KW-0456">Lyase</keyword>
<keyword id="KW-0479">Metal-binding</keyword>
<keyword id="KW-1185">Reference proteome</keyword>
<keyword id="KW-0862">Zinc</keyword>
<organism>
    <name type="scientific">Escherichia coli (strain 55989 / EAEC)</name>
    <dbReference type="NCBI Taxonomy" id="585055"/>
    <lineage>
        <taxon>Bacteria</taxon>
        <taxon>Pseudomonadati</taxon>
        <taxon>Pseudomonadota</taxon>
        <taxon>Gammaproteobacteria</taxon>
        <taxon>Enterobacterales</taxon>
        <taxon>Enterobacteriaceae</taxon>
        <taxon>Escherichia</taxon>
    </lineage>
</organism>
<protein>
    <recommendedName>
        <fullName evidence="1">D-tagatose-1,6-bisphosphate aldolase subunit GatY</fullName>
        <shortName evidence="1">TBPA</shortName>
        <shortName evidence="1">TagBP aldolase</shortName>
        <ecNumber evidence="1">4.1.2.40</ecNumber>
    </recommendedName>
    <alternativeName>
        <fullName evidence="1">D-tagatose-bisphosphate aldolase class II</fullName>
    </alternativeName>
    <alternativeName>
        <fullName evidence="1">Tagatose-bisphosphate aldolase</fullName>
    </alternativeName>
</protein>
<feature type="chain" id="PRO_1000165279" description="D-tagatose-1,6-bisphosphate aldolase subunit GatY">
    <location>
        <begin position="1"/>
        <end position="284"/>
    </location>
</feature>
<feature type="active site" description="Proton donor" evidence="1">
    <location>
        <position position="82"/>
    </location>
</feature>
<feature type="binding site" evidence="1">
    <location>
        <position position="83"/>
    </location>
    <ligand>
        <name>Zn(2+)</name>
        <dbReference type="ChEBI" id="CHEBI:29105"/>
        <note>catalytic</note>
    </ligand>
</feature>
<feature type="binding site" evidence="1">
    <location>
        <position position="180"/>
    </location>
    <ligand>
        <name>Zn(2+)</name>
        <dbReference type="ChEBI" id="CHEBI:29105"/>
        <note>catalytic</note>
    </ligand>
</feature>
<feature type="binding site" evidence="1">
    <location>
        <position position="181"/>
    </location>
    <ligand>
        <name>dihydroxyacetone phosphate</name>
        <dbReference type="ChEBI" id="CHEBI:57642"/>
    </ligand>
</feature>
<feature type="binding site" evidence="1">
    <location>
        <position position="208"/>
    </location>
    <ligand>
        <name>Zn(2+)</name>
        <dbReference type="ChEBI" id="CHEBI:29105"/>
        <note>catalytic</note>
    </ligand>
</feature>
<feature type="binding site" evidence="1">
    <location>
        <begin position="209"/>
        <end position="211"/>
    </location>
    <ligand>
        <name>dihydroxyacetone phosphate</name>
        <dbReference type="ChEBI" id="CHEBI:57642"/>
    </ligand>
</feature>
<feature type="binding site" evidence="1">
    <location>
        <begin position="230"/>
        <end position="233"/>
    </location>
    <ligand>
        <name>dihydroxyacetone phosphate</name>
        <dbReference type="ChEBI" id="CHEBI:57642"/>
    </ligand>
</feature>
<reference key="1">
    <citation type="journal article" date="2009" name="PLoS Genet.">
        <title>Organised genome dynamics in the Escherichia coli species results in highly diverse adaptive paths.</title>
        <authorList>
            <person name="Touchon M."/>
            <person name="Hoede C."/>
            <person name="Tenaillon O."/>
            <person name="Barbe V."/>
            <person name="Baeriswyl S."/>
            <person name="Bidet P."/>
            <person name="Bingen E."/>
            <person name="Bonacorsi S."/>
            <person name="Bouchier C."/>
            <person name="Bouvet O."/>
            <person name="Calteau A."/>
            <person name="Chiapello H."/>
            <person name="Clermont O."/>
            <person name="Cruveiller S."/>
            <person name="Danchin A."/>
            <person name="Diard M."/>
            <person name="Dossat C."/>
            <person name="Karoui M.E."/>
            <person name="Frapy E."/>
            <person name="Garry L."/>
            <person name="Ghigo J.M."/>
            <person name="Gilles A.M."/>
            <person name="Johnson J."/>
            <person name="Le Bouguenec C."/>
            <person name="Lescat M."/>
            <person name="Mangenot S."/>
            <person name="Martinez-Jehanne V."/>
            <person name="Matic I."/>
            <person name="Nassif X."/>
            <person name="Oztas S."/>
            <person name="Petit M.A."/>
            <person name="Pichon C."/>
            <person name="Rouy Z."/>
            <person name="Ruf C.S."/>
            <person name="Schneider D."/>
            <person name="Tourret J."/>
            <person name="Vacherie B."/>
            <person name="Vallenet D."/>
            <person name="Medigue C."/>
            <person name="Rocha E.P.C."/>
            <person name="Denamur E."/>
        </authorList>
    </citation>
    <scope>NUCLEOTIDE SEQUENCE [LARGE SCALE GENOMIC DNA]</scope>
    <source>
        <strain>55989 / EAEC</strain>
    </source>
</reference>
<sequence length="284" mass="30786">MCVVSTKQMLNNAQRGGYAVPAFNIHNLETMQVVVETAANLHAPVIIAGTPGTFTHAGTENLLALVSAMAKQYHHPLAIHLDHHTKFDDIAQKVRSGVRSVMIDASHLPFAQNISRVKEVVDFCHRFDVSVEAELGQLGGQEDDVQVNEADAFYTNPAQAREFAEATGIDSLAVAIGTAHGMYASAPALDFSRLENIRQWVNLPLVLHGASGLSTKDIQQTIKLGICKINVATELKNAFSQALKNYLTEHPEATDPRDYLQSAKSAMRDVVSKVIADCGCEGRA</sequence>
<gene>
    <name evidence="1" type="primary">gatY</name>
    <name type="ordered locus">EC55989_2351</name>
</gene>